<keyword id="KW-1185">Reference proteome</keyword>
<keyword id="KW-0687">Ribonucleoprotein</keyword>
<keyword id="KW-0689">Ribosomal protein</keyword>
<organism>
    <name type="scientific">Methanospirillum hungatei JF-1 (strain ATCC 27890 / DSM 864 / NBRC 100397 / JF-1)</name>
    <dbReference type="NCBI Taxonomy" id="323259"/>
    <lineage>
        <taxon>Archaea</taxon>
        <taxon>Methanobacteriati</taxon>
        <taxon>Methanobacteriota</taxon>
        <taxon>Stenosarchaea group</taxon>
        <taxon>Methanomicrobia</taxon>
        <taxon>Methanomicrobiales</taxon>
        <taxon>Methanospirillaceae</taxon>
        <taxon>Methanospirillum</taxon>
    </lineage>
</organism>
<comment type="similarity">
    <text evidence="1">Belongs to the eukaryotic ribosomal protein eL40 family.</text>
</comment>
<protein>
    <recommendedName>
        <fullName evidence="1">Large ribosomal subunit protein eL40</fullName>
    </recommendedName>
    <alternativeName>
        <fullName evidence="2">50S ribosomal protein L40e</fullName>
    </alternativeName>
</protein>
<reference key="1">
    <citation type="journal article" date="2016" name="Stand. Genomic Sci.">
        <title>Complete genome sequence of Methanospirillum hungatei type strain JF1.</title>
        <authorList>
            <person name="Gunsalus R.P."/>
            <person name="Cook L.E."/>
            <person name="Crable B."/>
            <person name="Rohlin L."/>
            <person name="McDonald E."/>
            <person name="Mouttaki H."/>
            <person name="Sieber J.R."/>
            <person name="Poweleit N."/>
            <person name="Zhou H."/>
            <person name="Lapidus A.L."/>
            <person name="Daligault H.E."/>
            <person name="Land M."/>
            <person name="Gilna P."/>
            <person name="Ivanova N."/>
            <person name="Kyrpides N."/>
            <person name="Culley D.E."/>
            <person name="McInerney M.J."/>
        </authorList>
    </citation>
    <scope>NUCLEOTIDE SEQUENCE [LARGE SCALE GENOMIC DNA]</scope>
    <source>
        <strain>ATCC 27890 / DSM 864 / NBRC 100397 / JF-1</strain>
    </source>
</reference>
<proteinExistence type="inferred from homology"/>
<accession>Q2FS38</accession>
<feature type="chain" id="PRO_1000046883" description="Large ribosomal subunit protein eL40">
    <location>
        <begin position="1"/>
        <end position="48"/>
    </location>
</feature>
<sequence>MARFPEAEARLLNVKICMHCNARNPVRAVSCRKCGYVHLRPKNKDRKA</sequence>
<name>RL40_METHJ</name>
<evidence type="ECO:0000255" key="1">
    <source>
        <dbReference type="HAMAP-Rule" id="MF_00788"/>
    </source>
</evidence>
<evidence type="ECO:0000305" key="2"/>
<gene>
    <name evidence="1" type="primary">rpl40e</name>
    <name type="ordered locus">Mhun_2870</name>
</gene>
<dbReference type="EMBL" id="CP000254">
    <property type="protein sequence ID" value="ABD42562.1"/>
    <property type="molecule type" value="Genomic_DNA"/>
</dbReference>
<dbReference type="RefSeq" id="WP_011449815.1">
    <property type="nucleotide sequence ID" value="NC_007796.1"/>
</dbReference>
<dbReference type="SMR" id="Q2FS38"/>
<dbReference type="FunCoup" id="Q2FS38">
    <property type="interactions" value="63"/>
</dbReference>
<dbReference type="STRING" id="323259.Mhun_2870"/>
<dbReference type="EnsemblBacteria" id="ABD42562">
    <property type="protein sequence ID" value="ABD42562"/>
    <property type="gene ID" value="Mhun_2870"/>
</dbReference>
<dbReference type="GeneID" id="3923827"/>
<dbReference type="KEGG" id="mhu:Mhun_2870"/>
<dbReference type="eggNOG" id="arCOG04049">
    <property type="taxonomic scope" value="Archaea"/>
</dbReference>
<dbReference type="HOGENOM" id="CLU_205640_0_0_2"/>
<dbReference type="InParanoid" id="Q2FS38"/>
<dbReference type="OrthoDB" id="45138at2157"/>
<dbReference type="Proteomes" id="UP000001941">
    <property type="component" value="Chromosome"/>
</dbReference>
<dbReference type="GO" id="GO:1990904">
    <property type="term" value="C:ribonucleoprotein complex"/>
    <property type="evidence" value="ECO:0007669"/>
    <property type="project" value="UniProtKB-KW"/>
</dbReference>
<dbReference type="GO" id="GO:0005840">
    <property type="term" value="C:ribosome"/>
    <property type="evidence" value="ECO:0007669"/>
    <property type="project" value="UniProtKB-KW"/>
</dbReference>
<dbReference type="GO" id="GO:0003735">
    <property type="term" value="F:structural constituent of ribosome"/>
    <property type="evidence" value="ECO:0007669"/>
    <property type="project" value="InterPro"/>
</dbReference>
<dbReference type="GO" id="GO:0006412">
    <property type="term" value="P:translation"/>
    <property type="evidence" value="ECO:0007669"/>
    <property type="project" value="UniProtKB-UniRule"/>
</dbReference>
<dbReference type="Gene3D" id="4.10.1060.50">
    <property type="match status" value="1"/>
</dbReference>
<dbReference type="HAMAP" id="MF_00788">
    <property type="entry name" value="Ribosomal_eL40"/>
    <property type="match status" value="1"/>
</dbReference>
<dbReference type="InterPro" id="IPR023657">
    <property type="entry name" value="Ribosomal_eL40_arc"/>
</dbReference>
<dbReference type="InterPro" id="IPR001975">
    <property type="entry name" value="Ribosomal_eL40_dom"/>
</dbReference>
<dbReference type="InterPro" id="IPR038587">
    <property type="entry name" value="Ribosomal_eL40_sf"/>
</dbReference>
<dbReference type="InterPro" id="IPR011332">
    <property type="entry name" value="Ribosomal_zn-bd"/>
</dbReference>
<dbReference type="NCBIfam" id="NF003161">
    <property type="entry name" value="PRK04136.1"/>
    <property type="match status" value="1"/>
</dbReference>
<dbReference type="PANTHER" id="PTHR39649">
    <property type="entry name" value="50S RIBOSOMAL PROTEIN L40E"/>
    <property type="match status" value="1"/>
</dbReference>
<dbReference type="PANTHER" id="PTHR39649:SF1">
    <property type="entry name" value="LARGE RIBOSOMAL SUBUNIT PROTEIN EL40"/>
    <property type="match status" value="1"/>
</dbReference>
<dbReference type="Pfam" id="PF01020">
    <property type="entry name" value="Ribosomal_L40e"/>
    <property type="match status" value="1"/>
</dbReference>
<dbReference type="SMART" id="SM01377">
    <property type="entry name" value="Ribosomal_L40e"/>
    <property type="match status" value="1"/>
</dbReference>
<dbReference type="SUPFAM" id="SSF57829">
    <property type="entry name" value="Zn-binding ribosomal proteins"/>
    <property type="match status" value="1"/>
</dbReference>